<comment type="function">
    <text evidence="1">Motor protein that may participate in process critical to neuronal development and function such as cell migration, neurite outgrowth and vesicular transport.</text>
</comment>
<comment type="alternative products">
    <event type="alternative splicing"/>
    <isoform>
        <id>Q05096-1</id>
        <name>A</name>
        <sequence type="displayed"/>
    </isoform>
    <isoform>
        <id>Q05096-2</id>
        <name>B</name>
        <sequence type="described" ref="VSP_003348"/>
    </isoform>
    <isoform>
        <id>Q05096-3</id>
        <name>C</name>
        <sequence type="described" ref="VSP_003349"/>
    </isoform>
</comment>
<comment type="similarity">
    <text evidence="8">Belongs to the TRAFAC class myosin-kinesin ATPase superfamily. Myosin family.</text>
</comment>
<comment type="caution">
    <text evidence="8">Represents an unconventional myosin. This protein should not be confused with the conventional myosin-1 (MYH1).</text>
</comment>
<sequence length="1136" mass="131918">MAKKEVKSSLLDNMIGVGDTVLLEPLNEETFIDNLKKRFDHNEIYTYIGSVVISVNPYRSLPIYSPEKVEDYRNRNFYELSPHIFALSDEAYRSLRDQDKDQCILITGESGAGKTEASKLVMSYVAAVCGKGAEVNQVKEQLLQSTPVLEAFGNAKTVRNDNSSRFGKYMDIEFDFKGDPLGGVISNYLLEKSRVVKQPRGERNFHVFYQLLSGASEELLHKLKLERDFSRYNYLSLDSAKVNGVDDAANFRTVRNAMQIVGFSDPEAESVLEVVAAVLKLGNIEFKPESRMNGLDESKIKDKNELKEICELTSIDQVVLERAFSFRTVEAKQEKVSTTLNVAQAYYARDALAKNLYSRLFSWLVNRINESIKAQTKVRKKVMGVLDIYGFEIFEDNSFEQFIINYCNEKLQQIFIELTLKEEQEEYIREDIEWTHIDYFNNAIICDLIENNTNGILAMLDEECLRPGTVTDETFLEKLNQVCATHQHFESRMSKCSRFLNDTTLPHSCFRIQHYAGKVLYQVEGFVDKNNDLLYRDLSQAMWKAGHALIKSLFPEGNPAKVNLKRPPTAGSQFKASVATLMKNLQTKNPNYIRCIKPNDKKAAHIFSESLVCHQIRYLGLLENVRVRRAGYAFRQAYEPCLERYKMLCKQTWPHWKGPARSGVEVLFNELEIPVEEYSFGRSKIFIRNPRTLFQLEDLRKQRLEDLATLIQKIYRGWKCRTHFLLMKRSQVVIAAWYRRYAQQKRYQQIKSSALVIQSYIRGWKARKILRELKHQKRCKEAATTIAAYWHGTQARKERRRLKDEARNKHAIAVIWAFWLGSKARRELKRLKEEARRKHAVAVIWAYWLGLKVRREYRKFFRANAGKKIYEFTLQRIVQKYLLEMKNKMPSLSPIDKNWPSRPYLFLDSTHKELKRIFHLWRCKKYRDQFTDQQKLIYEEKLEASELFKDKKALYPSSVGQPFQGAYLEINKNPKYKKLKDAIEEKIIIAEVVNKINRANGKSTSRIFLLTNNNLLLADQKSGQIKSEVPLVDVTKVSMSSQNDGFFAVHLKEGSEAASKGDFLFSSDHLIEMATKLYRTTLSQTKQKLNIEISDEFLVQFRQDKVCVKFIQGNQKNGSVPTCKRKNNRLLEVAVP</sequence>
<dbReference type="EMBL" id="X68199">
    <property type="protein sequence ID" value="CAA48287.1"/>
    <property type="molecule type" value="mRNA"/>
</dbReference>
<dbReference type="PIR" id="A45439">
    <property type="entry name" value="A45439"/>
</dbReference>
<dbReference type="PIR" id="C45439">
    <property type="entry name" value="C45439"/>
</dbReference>
<dbReference type="RefSeq" id="NP_446438.1">
    <molecule id="Q05096-1"/>
    <property type="nucleotide sequence ID" value="NM_053986.3"/>
</dbReference>
<dbReference type="PDB" id="4L79">
    <property type="method" value="X-ray"/>
    <property type="resolution" value="2.30 A"/>
    <property type="chains" value="A=1-728"/>
</dbReference>
<dbReference type="PDB" id="5V7X">
    <property type="method" value="X-ray"/>
    <property type="resolution" value="3.14 A"/>
    <property type="chains" value="A=1-728"/>
</dbReference>
<dbReference type="PDB" id="6C1D">
    <property type="method" value="EM"/>
    <property type="resolution" value="3.20 A"/>
    <property type="chains" value="P=6-728"/>
</dbReference>
<dbReference type="PDB" id="6C1G">
    <property type="method" value="EM"/>
    <property type="resolution" value="3.80 A"/>
    <property type="chains" value="P=6-728"/>
</dbReference>
<dbReference type="PDB" id="6C1H">
    <property type="method" value="EM"/>
    <property type="resolution" value="3.90 A"/>
    <property type="chains" value="P=6-728"/>
</dbReference>
<dbReference type="PDBsum" id="4L79"/>
<dbReference type="PDBsum" id="5V7X"/>
<dbReference type="PDBsum" id="6C1D"/>
<dbReference type="PDBsum" id="6C1G"/>
<dbReference type="PDBsum" id="6C1H"/>
<dbReference type="EMDB" id="EMD-7329"/>
<dbReference type="EMDB" id="EMD-7330"/>
<dbReference type="EMDB" id="EMD-7331"/>
<dbReference type="SMR" id="Q05096"/>
<dbReference type="BioGRID" id="250654">
    <property type="interactions" value="2"/>
</dbReference>
<dbReference type="FunCoup" id="Q05096">
    <property type="interactions" value="835"/>
</dbReference>
<dbReference type="STRING" id="10116.ENSRNOP00000061523"/>
<dbReference type="BindingDB" id="Q05096"/>
<dbReference type="ChEMBL" id="CHEMBL4295803"/>
<dbReference type="iPTMnet" id="Q05096"/>
<dbReference type="PhosphoSitePlus" id="Q05096"/>
<dbReference type="PaxDb" id="10116-ENSRNOP00000059455"/>
<dbReference type="PeptideAtlas" id="Q05096"/>
<dbReference type="Ensembl" id="ENSRNOT00000068433.4">
    <molecule id="Q05096-1"/>
    <property type="protein sequence ID" value="ENSRNOP00000061523.3"/>
    <property type="gene ID" value="ENSRNOG00000048152.3"/>
</dbReference>
<dbReference type="GeneID" id="117057"/>
<dbReference type="KEGG" id="rno:117057"/>
<dbReference type="UCSC" id="RGD:70994">
    <molecule id="Q05096-1"/>
    <property type="organism name" value="rat"/>
</dbReference>
<dbReference type="AGR" id="RGD:70994"/>
<dbReference type="CTD" id="4430"/>
<dbReference type="RGD" id="70994">
    <property type="gene designation" value="Myo1b"/>
</dbReference>
<dbReference type="eggNOG" id="KOG0164">
    <property type="taxonomic scope" value="Eukaryota"/>
</dbReference>
<dbReference type="GeneTree" id="ENSGT00940000155752"/>
<dbReference type="HOGENOM" id="CLU_000192_7_7_1"/>
<dbReference type="InParanoid" id="Q05096"/>
<dbReference type="OMA" id="NARKMYS"/>
<dbReference type="OrthoDB" id="6108017at2759"/>
<dbReference type="EvolutionaryTrace" id="Q05096"/>
<dbReference type="PRO" id="PR:Q05096"/>
<dbReference type="Proteomes" id="UP000002494">
    <property type="component" value="Chromosome 9"/>
</dbReference>
<dbReference type="Bgee" id="ENSRNOG00000048152">
    <property type="expression patterns" value="Expressed in lung and 19 other cell types or tissues"/>
</dbReference>
<dbReference type="GO" id="GO:0015629">
    <property type="term" value="C:actin cytoskeleton"/>
    <property type="evidence" value="ECO:0000318"/>
    <property type="project" value="GO_Central"/>
</dbReference>
<dbReference type="GO" id="GO:0005884">
    <property type="term" value="C:actin filament"/>
    <property type="evidence" value="ECO:0000266"/>
    <property type="project" value="RGD"/>
</dbReference>
<dbReference type="GO" id="GO:0045177">
    <property type="term" value="C:apical part of cell"/>
    <property type="evidence" value="ECO:0000314"/>
    <property type="project" value="RGD"/>
</dbReference>
<dbReference type="GO" id="GO:0005903">
    <property type="term" value="C:brush border"/>
    <property type="evidence" value="ECO:0000314"/>
    <property type="project" value="RGD"/>
</dbReference>
<dbReference type="GO" id="GO:0071944">
    <property type="term" value="C:cell periphery"/>
    <property type="evidence" value="ECO:0000314"/>
    <property type="project" value="UniProtKB"/>
</dbReference>
<dbReference type="GO" id="GO:0005737">
    <property type="term" value="C:cytoplasm"/>
    <property type="evidence" value="ECO:0000314"/>
    <property type="project" value="UniProtKB"/>
</dbReference>
<dbReference type="GO" id="GO:0005769">
    <property type="term" value="C:early endosome"/>
    <property type="evidence" value="ECO:0000266"/>
    <property type="project" value="RGD"/>
</dbReference>
<dbReference type="GO" id="GO:0010008">
    <property type="term" value="C:endosome membrane"/>
    <property type="evidence" value="ECO:0000266"/>
    <property type="project" value="RGD"/>
</dbReference>
<dbReference type="GO" id="GO:0030175">
    <property type="term" value="C:filopodium"/>
    <property type="evidence" value="ECO:0000314"/>
    <property type="project" value="UniProtKB"/>
</dbReference>
<dbReference type="GO" id="GO:0005902">
    <property type="term" value="C:microvillus"/>
    <property type="evidence" value="ECO:0000318"/>
    <property type="project" value="GO_Central"/>
</dbReference>
<dbReference type="GO" id="GO:0016459">
    <property type="term" value="C:myosin complex"/>
    <property type="evidence" value="ECO:0007669"/>
    <property type="project" value="UniProtKB-KW"/>
</dbReference>
<dbReference type="GO" id="GO:0048471">
    <property type="term" value="C:perinuclear region of cytoplasm"/>
    <property type="evidence" value="ECO:0000266"/>
    <property type="project" value="RGD"/>
</dbReference>
<dbReference type="GO" id="GO:0005886">
    <property type="term" value="C:plasma membrane"/>
    <property type="evidence" value="ECO:0000314"/>
    <property type="project" value="UniProtKB"/>
</dbReference>
<dbReference type="GO" id="GO:0032588">
    <property type="term" value="C:trans-Golgi network membrane"/>
    <property type="evidence" value="ECO:0000266"/>
    <property type="project" value="RGD"/>
</dbReference>
<dbReference type="GO" id="GO:0003779">
    <property type="term" value="F:actin binding"/>
    <property type="evidence" value="ECO:0000314"/>
    <property type="project" value="UniProtKB"/>
</dbReference>
<dbReference type="GO" id="GO:0051015">
    <property type="term" value="F:actin filament binding"/>
    <property type="evidence" value="ECO:0000314"/>
    <property type="project" value="RGD"/>
</dbReference>
<dbReference type="GO" id="GO:0005524">
    <property type="term" value="F:ATP binding"/>
    <property type="evidence" value="ECO:0000314"/>
    <property type="project" value="UniProtKB"/>
</dbReference>
<dbReference type="GO" id="GO:0005516">
    <property type="term" value="F:calmodulin binding"/>
    <property type="evidence" value="ECO:0000314"/>
    <property type="project" value="UniProtKB"/>
</dbReference>
<dbReference type="GO" id="GO:0003774">
    <property type="term" value="F:cytoskeletal motor activity"/>
    <property type="evidence" value="ECO:0000314"/>
    <property type="project" value="UniProtKB"/>
</dbReference>
<dbReference type="GO" id="GO:0000146">
    <property type="term" value="F:microfilament motor activity"/>
    <property type="evidence" value="ECO:0000314"/>
    <property type="project" value="UniProtKB"/>
</dbReference>
<dbReference type="GO" id="GO:0005547">
    <property type="term" value="F:phosphatidylinositol-3,4,5-trisphosphate binding"/>
    <property type="evidence" value="ECO:0000314"/>
    <property type="project" value="UniProtKB"/>
</dbReference>
<dbReference type="GO" id="GO:0005546">
    <property type="term" value="F:phosphatidylinositol-4,5-bisphosphate binding"/>
    <property type="evidence" value="ECO:0000314"/>
    <property type="project" value="UniProtKB"/>
</dbReference>
<dbReference type="GO" id="GO:0051017">
    <property type="term" value="P:actin filament bundle assembly"/>
    <property type="evidence" value="ECO:0000314"/>
    <property type="project" value="UniProtKB"/>
</dbReference>
<dbReference type="GO" id="GO:0007015">
    <property type="term" value="P:actin filament organization"/>
    <property type="evidence" value="ECO:0000266"/>
    <property type="project" value="RGD"/>
</dbReference>
<dbReference type="GO" id="GO:0030048">
    <property type="term" value="P:actin filament-based movement"/>
    <property type="evidence" value="ECO:0000314"/>
    <property type="project" value="UniProtKB"/>
</dbReference>
<dbReference type="GO" id="GO:0006897">
    <property type="term" value="P:endocytosis"/>
    <property type="evidence" value="ECO:0000318"/>
    <property type="project" value="GO_Central"/>
</dbReference>
<dbReference type="GO" id="GO:0007399">
    <property type="term" value="P:nervous system development"/>
    <property type="evidence" value="ECO:0000303"/>
    <property type="project" value="RGD"/>
</dbReference>
<dbReference type="GO" id="GO:0006892">
    <property type="term" value="P:post-Golgi vesicle-mediated transport"/>
    <property type="evidence" value="ECO:0000266"/>
    <property type="project" value="RGD"/>
</dbReference>
<dbReference type="GO" id="GO:0033572">
    <property type="term" value="P:transferrin transport"/>
    <property type="evidence" value="ECO:0000266"/>
    <property type="project" value="RGD"/>
</dbReference>
<dbReference type="CDD" id="cd01378">
    <property type="entry name" value="MYSc_Myo1"/>
    <property type="match status" value="1"/>
</dbReference>
<dbReference type="FunFam" id="1.20.5.4820:FF:000013">
    <property type="entry name" value="LOW QUALITY PROTEIN: unconventional myosin-Ib"/>
    <property type="match status" value="1"/>
</dbReference>
<dbReference type="FunFam" id="1.10.10.820:FF:000001">
    <property type="entry name" value="Myosin heavy chain"/>
    <property type="match status" value="1"/>
</dbReference>
<dbReference type="FunFam" id="1.20.5.190:FF:000007">
    <property type="entry name" value="Myosin-ib isoform 2"/>
    <property type="match status" value="1"/>
</dbReference>
<dbReference type="FunFam" id="3.40.850.10:FF:000101">
    <property type="entry name" value="Slow myosin heavy chain 2"/>
    <property type="match status" value="1"/>
</dbReference>
<dbReference type="FunFam" id="1.20.58.530:FF:000004">
    <property type="entry name" value="Unconventional myosin ID"/>
    <property type="match status" value="1"/>
</dbReference>
<dbReference type="FunFam" id="1.20.120.720:FF:000004">
    <property type="entry name" value="unconventional myosin-Ib isoform X1"/>
    <property type="match status" value="1"/>
</dbReference>
<dbReference type="Gene3D" id="1.10.10.820">
    <property type="match status" value="1"/>
</dbReference>
<dbReference type="Gene3D" id="1.20.5.190">
    <property type="match status" value="2"/>
</dbReference>
<dbReference type="Gene3D" id="1.20.58.530">
    <property type="match status" value="1"/>
</dbReference>
<dbReference type="Gene3D" id="6.20.240.20">
    <property type="match status" value="1"/>
</dbReference>
<dbReference type="Gene3D" id="3.40.850.10">
    <property type="entry name" value="Kinesin motor domain"/>
    <property type="match status" value="1"/>
</dbReference>
<dbReference type="Gene3D" id="1.20.120.720">
    <property type="entry name" value="Myosin VI head, motor domain, U50 subdomain"/>
    <property type="match status" value="1"/>
</dbReference>
<dbReference type="InterPro" id="IPR000048">
    <property type="entry name" value="IQ_motif_EF-hand-BS"/>
</dbReference>
<dbReference type="InterPro" id="IPR036961">
    <property type="entry name" value="Kinesin_motor_dom_sf"/>
</dbReference>
<dbReference type="InterPro" id="IPR001609">
    <property type="entry name" value="Myosin_head_motor_dom-like"/>
</dbReference>
<dbReference type="InterPro" id="IPR010926">
    <property type="entry name" value="Myosin_TH1"/>
</dbReference>
<dbReference type="InterPro" id="IPR036072">
    <property type="entry name" value="MYSc_Myo1"/>
</dbReference>
<dbReference type="InterPro" id="IPR027417">
    <property type="entry name" value="P-loop_NTPase"/>
</dbReference>
<dbReference type="PANTHER" id="PTHR13140">
    <property type="entry name" value="MYOSIN"/>
    <property type="match status" value="1"/>
</dbReference>
<dbReference type="PANTHER" id="PTHR13140:SF277">
    <property type="entry name" value="UNCONVENTIONAL MYOSIN-IB"/>
    <property type="match status" value="1"/>
</dbReference>
<dbReference type="Pfam" id="PF00612">
    <property type="entry name" value="IQ"/>
    <property type="match status" value="2"/>
</dbReference>
<dbReference type="Pfam" id="PF00063">
    <property type="entry name" value="Myosin_head"/>
    <property type="match status" value="1"/>
</dbReference>
<dbReference type="Pfam" id="PF06017">
    <property type="entry name" value="Myosin_TH1"/>
    <property type="match status" value="1"/>
</dbReference>
<dbReference type="PRINTS" id="PR00193">
    <property type="entry name" value="MYOSINHEAVY"/>
</dbReference>
<dbReference type="SMART" id="SM00015">
    <property type="entry name" value="IQ"/>
    <property type="match status" value="6"/>
</dbReference>
<dbReference type="SMART" id="SM00242">
    <property type="entry name" value="MYSc"/>
    <property type="match status" value="1"/>
</dbReference>
<dbReference type="SUPFAM" id="SSF52540">
    <property type="entry name" value="P-loop containing nucleoside triphosphate hydrolases"/>
    <property type="match status" value="2"/>
</dbReference>
<dbReference type="PROSITE" id="PS50096">
    <property type="entry name" value="IQ"/>
    <property type="match status" value="5"/>
</dbReference>
<dbReference type="PROSITE" id="PS51456">
    <property type="entry name" value="MYOSIN_MOTOR"/>
    <property type="match status" value="1"/>
</dbReference>
<dbReference type="PROSITE" id="PS51757">
    <property type="entry name" value="TH1"/>
    <property type="match status" value="1"/>
</dbReference>
<protein>
    <recommendedName>
        <fullName>Unconventional myosin-Ib</fullName>
    </recommendedName>
    <alternativeName>
        <fullName>Myosin I alpha</fullName>
        <shortName>MMI-alpha</shortName>
        <shortName>MMIa</shortName>
    </alternativeName>
    <alternativeName>
        <fullName>Myosin heavy chain myr 1</fullName>
    </alternativeName>
</protein>
<keyword id="KW-0002">3D-structure</keyword>
<keyword id="KW-0009">Actin-binding</keyword>
<keyword id="KW-0025">Alternative splicing</keyword>
<keyword id="KW-0067">ATP-binding</keyword>
<keyword id="KW-0112">Calmodulin-binding</keyword>
<keyword id="KW-1017">Isopeptide bond</keyword>
<keyword id="KW-0505">Motor protein</keyword>
<keyword id="KW-0518">Myosin</keyword>
<keyword id="KW-0547">Nucleotide-binding</keyword>
<keyword id="KW-0597">Phosphoprotein</keyword>
<keyword id="KW-1185">Reference proteome</keyword>
<keyword id="KW-0677">Repeat</keyword>
<keyword id="KW-0832">Ubl conjugation</keyword>
<organism>
    <name type="scientific">Rattus norvegicus</name>
    <name type="common">Rat</name>
    <dbReference type="NCBI Taxonomy" id="10116"/>
    <lineage>
        <taxon>Eukaryota</taxon>
        <taxon>Metazoa</taxon>
        <taxon>Chordata</taxon>
        <taxon>Craniata</taxon>
        <taxon>Vertebrata</taxon>
        <taxon>Euteleostomi</taxon>
        <taxon>Mammalia</taxon>
        <taxon>Eutheria</taxon>
        <taxon>Euarchontoglires</taxon>
        <taxon>Glires</taxon>
        <taxon>Rodentia</taxon>
        <taxon>Myomorpha</taxon>
        <taxon>Muroidea</taxon>
        <taxon>Muridae</taxon>
        <taxon>Murinae</taxon>
        <taxon>Rattus</taxon>
    </lineage>
</organism>
<evidence type="ECO:0000250" key="1"/>
<evidence type="ECO:0000250" key="2">
    <source>
        <dbReference type="UniProtKB" id="O43795"/>
    </source>
</evidence>
<evidence type="ECO:0000255" key="3"/>
<evidence type="ECO:0000255" key="4">
    <source>
        <dbReference type="PROSITE-ProRule" id="PRU00116"/>
    </source>
</evidence>
<evidence type="ECO:0000255" key="5">
    <source>
        <dbReference type="PROSITE-ProRule" id="PRU00782"/>
    </source>
</evidence>
<evidence type="ECO:0000255" key="6">
    <source>
        <dbReference type="PROSITE-ProRule" id="PRU01093"/>
    </source>
</evidence>
<evidence type="ECO:0000303" key="7">
    <source>
    </source>
</evidence>
<evidence type="ECO:0000305" key="8"/>
<evidence type="ECO:0007829" key="9">
    <source>
        <dbReference type="PDB" id="4L79"/>
    </source>
</evidence>
<evidence type="ECO:0007829" key="10">
    <source>
        <dbReference type="PDB" id="5V7X"/>
    </source>
</evidence>
<evidence type="ECO:0007829" key="11">
    <source>
        <dbReference type="PDB" id="6C1D"/>
    </source>
</evidence>
<feature type="chain" id="PRO_0000123444" description="Unconventional myosin-Ib">
    <location>
        <begin position="1"/>
        <end position="1136"/>
    </location>
</feature>
<feature type="domain" description="Myosin motor" evidence="5">
    <location>
        <begin position="15"/>
        <end position="701"/>
    </location>
</feature>
<feature type="domain" description="IQ 1" evidence="4">
    <location>
        <begin position="704"/>
        <end position="729"/>
    </location>
</feature>
<feature type="domain" description="IQ 2" evidence="4">
    <location>
        <begin position="730"/>
        <end position="750"/>
    </location>
</feature>
<feature type="domain" description="IQ 3" evidence="4">
    <location>
        <begin position="750"/>
        <end position="778"/>
    </location>
</feature>
<feature type="domain" description="IQ 4" evidence="4">
    <location>
        <begin position="780"/>
        <end position="807"/>
    </location>
</feature>
<feature type="domain" description="IQ 5" evidence="4">
    <location>
        <begin position="808"/>
        <end position="837"/>
    </location>
</feature>
<feature type="domain" description="IQ 6" evidence="4">
    <location>
        <begin position="837"/>
        <end position="866"/>
    </location>
</feature>
<feature type="domain" description="TH1" evidence="6">
    <location>
        <begin position="952"/>
        <end position="1136"/>
    </location>
</feature>
<feature type="region of interest" description="Actin-binding" evidence="3">
    <location>
        <begin position="592"/>
        <end position="599"/>
    </location>
</feature>
<feature type="binding site" evidence="3">
    <location>
        <begin position="108"/>
        <end position="115"/>
    </location>
    <ligand>
        <name>ATP</name>
        <dbReference type="ChEBI" id="CHEBI:30616"/>
    </ligand>
</feature>
<feature type="modified residue" description="Phosphoserine" evidence="2">
    <location>
        <position position="60"/>
    </location>
</feature>
<feature type="cross-link" description="Glycyl lysine isopeptide (Lys-Gly) (interchain with G-Cter in SUMO1); alternate" evidence="2">
    <location>
        <position position="287"/>
    </location>
</feature>
<feature type="cross-link" description="Glycyl lysine isopeptide (Lys-Gly) (interchain with G-Cter in SUMO2); alternate" evidence="2">
    <location>
        <position position="287"/>
    </location>
</feature>
<feature type="splice variant" id="VSP_003349" description="In isoform C." evidence="7">
    <location>
        <begin position="794"/>
        <end position="852"/>
    </location>
</feature>
<feature type="splice variant" id="VSP_003348" description="In isoform B." evidence="7">
    <location>
        <begin position="794"/>
        <end position="823"/>
    </location>
</feature>
<feature type="turn" evidence="9">
    <location>
        <begin position="10"/>
        <end position="13"/>
    </location>
</feature>
<feature type="helix" evidence="9">
    <location>
        <begin position="20"/>
        <end position="22"/>
    </location>
</feature>
<feature type="helix" evidence="9">
    <location>
        <begin position="28"/>
        <end position="40"/>
    </location>
</feature>
<feature type="strand" evidence="9">
    <location>
        <begin position="45"/>
        <end position="48"/>
    </location>
</feature>
<feature type="strand" evidence="9">
    <location>
        <begin position="51"/>
        <end position="55"/>
    </location>
</feature>
<feature type="helix" evidence="9">
    <location>
        <begin position="66"/>
        <end position="72"/>
    </location>
</feature>
<feature type="turn" evidence="9">
    <location>
        <begin position="77"/>
        <end position="79"/>
    </location>
</feature>
<feature type="strand" evidence="9">
    <location>
        <begin position="80"/>
        <end position="82"/>
    </location>
</feature>
<feature type="helix" evidence="9">
    <location>
        <begin position="84"/>
        <end position="98"/>
    </location>
</feature>
<feature type="strand" evidence="9">
    <location>
        <begin position="102"/>
        <end position="109"/>
    </location>
</feature>
<feature type="helix" evidence="9">
    <location>
        <begin position="112"/>
        <end position="128"/>
    </location>
</feature>
<feature type="helix" evidence="9">
    <location>
        <begin position="133"/>
        <end position="144"/>
    </location>
</feature>
<feature type="helix" evidence="9">
    <location>
        <begin position="146"/>
        <end position="153"/>
    </location>
</feature>
<feature type="strand" evidence="10">
    <location>
        <begin position="161"/>
        <end position="164"/>
    </location>
</feature>
<feature type="strand" evidence="9">
    <location>
        <begin position="166"/>
        <end position="174"/>
    </location>
</feature>
<feature type="strand" evidence="9">
    <location>
        <begin position="180"/>
        <end position="188"/>
    </location>
</feature>
<feature type="helix" evidence="9">
    <location>
        <begin position="193"/>
        <end position="196"/>
    </location>
</feature>
<feature type="helix" evidence="9">
    <location>
        <begin position="206"/>
        <end position="214"/>
    </location>
</feature>
<feature type="helix" evidence="9">
    <location>
        <begin position="217"/>
        <end position="222"/>
    </location>
</feature>
<feature type="helix" evidence="9">
    <location>
        <begin position="229"/>
        <end position="231"/>
    </location>
</feature>
<feature type="strand" evidence="10">
    <location>
        <begin position="233"/>
        <end position="235"/>
    </location>
</feature>
<feature type="strand" evidence="11">
    <location>
        <begin position="243"/>
        <end position="245"/>
    </location>
</feature>
<feature type="helix" evidence="9">
    <location>
        <begin position="247"/>
        <end position="260"/>
    </location>
</feature>
<feature type="helix" evidence="9">
    <location>
        <begin position="265"/>
        <end position="281"/>
    </location>
</feature>
<feature type="strand" evidence="10">
    <location>
        <begin position="286"/>
        <end position="289"/>
    </location>
</feature>
<feature type="strand" evidence="11">
    <location>
        <begin position="292"/>
        <end position="295"/>
    </location>
</feature>
<feature type="strand" evidence="9">
    <location>
        <begin position="299"/>
        <end position="301"/>
    </location>
</feature>
<feature type="helix" evidence="9">
    <location>
        <begin position="304"/>
        <end position="313"/>
    </location>
</feature>
<feature type="helix" evidence="9">
    <location>
        <begin position="317"/>
        <end position="325"/>
    </location>
</feature>
<feature type="strand" evidence="9">
    <location>
        <begin position="326"/>
        <end position="328"/>
    </location>
</feature>
<feature type="strand" evidence="9">
    <location>
        <begin position="331"/>
        <end position="334"/>
    </location>
</feature>
<feature type="strand" evidence="9">
    <location>
        <begin position="337"/>
        <end position="339"/>
    </location>
</feature>
<feature type="helix" evidence="9">
    <location>
        <begin position="342"/>
        <end position="370"/>
    </location>
</feature>
<feature type="strand" evidence="9">
    <location>
        <begin position="381"/>
        <end position="387"/>
    </location>
</feature>
<feature type="strand" evidence="9">
    <location>
        <begin position="395"/>
        <end position="397"/>
    </location>
</feature>
<feature type="helix" evidence="9">
    <location>
        <begin position="399"/>
        <end position="429"/>
    </location>
</feature>
<feature type="helix" evidence="9">
    <location>
        <begin position="442"/>
        <end position="450"/>
    </location>
</feature>
<feature type="turn" evidence="9">
    <location>
        <begin position="452"/>
        <end position="454"/>
    </location>
</feature>
<feature type="helix" evidence="9">
    <location>
        <begin position="456"/>
        <end position="465"/>
    </location>
</feature>
<feature type="strand" evidence="9">
    <location>
        <begin position="466"/>
        <end position="468"/>
    </location>
</feature>
<feature type="helix" evidence="9">
    <location>
        <begin position="472"/>
        <end position="482"/>
    </location>
</feature>
<feature type="strand" evidence="10">
    <location>
        <begin position="489"/>
        <end position="491"/>
    </location>
</feature>
<feature type="turn" evidence="9">
    <location>
        <begin position="492"/>
        <end position="494"/>
    </location>
</feature>
<feature type="turn" evidence="11">
    <location>
        <begin position="498"/>
        <end position="501"/>
    </location>
</feature>
<feature type="strand" evidence="9">
    <location>
        <begin position="507"/>
        <end position="514"/>
    </location>
</feature>
<feature type="strand" evidence="9">
    <location>
        <begin position="517"/>
        <end position="522"/>
    </location>
</feature>
<feature type="helix" evidence="9">
    <location>
        <begin position="526"/>
        <end position="530"/>
    </location>
</feature>
<feature type="helix" evidence="9">
    <location>
        <begin position="536"/>
        <end position="543"/>
    </location>
</feature>
<feature type="strand" evidence="11">
    <location>
        <begin position="544"/>
        <end position="547"/>
    </location>
</feature>
<feature type="helix" evidence="9">
    <location>
        <begin position="548"/>
        <end position="553"/>
    </location>
</feature>
<feature type="helix" evidence="9">
    <location>
        <begin position="555"/>
        <end position="557"/>
    </location>
</feature>
<feature type="strand" evidence="10">
    <location>
        <begin position="558"/>
        <end position="561"/>
    </location>
</feature>
<feature type="helix" evidence="9">
    <location>
        <begin position="570"/>
        <end position="586"/>
    </location>
</feature>
<feature type="strand" evidence="9">
    <location>
        <begin position="588"/>
        <end position="596"/>
    </location>
</feature>
<feature type="helix" evidence="9">
    <location>
        <begin position="609"/>
        <end position="619"/>
    </location>
</feature>
<feature type="helix" evidence="9">
    <location>
        <begin position="621"/>
        <end position="629"/>
    </location>
</feature>
<feature type="strand" evidence="9">
    <location>
        <begin position="633"/>
        <end position="637"/>
    </location>
</feature>
<feature type="helix" evidence="9">
    <location>
        <begin position="638"/>
        <end position="645"/>
    </location>
</feature>
<feature type="helix" evidence="10">
    <location>
        <begin position="646"/>
        <end position="648"/>
    </location>
</feature>
<feature type="turn" evidence="9">
    <location>
        <begin position="650"/>
        <end position="655"/>
    </location>
</feature>
<feature type="helix" evidence="9">
    <location>
        <begin position="660"/>
        <end position="670"/>
    </location>
</feature>
<feature type="strand" evidence="9">
    <location>
        <begin position="677"/>
        <end position="680"/>
    </location>
</feature>
<feature type="strand" evidence="9">
    <location>
        <begin position="682"/>
        <end position="688"/>
    </location>
</feature>
<feature type="helix" evidence="9">
    <location>
        <begin position="690"/>
        <end position="728"/>
    </location>
</feature>
<gene>
    <name type="primary">Myo1b</name>
    <name type="synonym">Myo1a</name>
    <name type="synonym">Myr1</name>
</gene>
<proteinExistence type="evidence at protein level"/>
<accession>Q05096</accession>
<name>MYO1B_RAT</name>
<reference key="1">
    <citation type="journal article" date="1993" name="J. Cell Biol.">
        <title>Identification, characterization and cloning of myr 1, a mammalian myosin-I.</title>
        <authorList>
            <person name="Ruppert C."/>
            <person name="Kroschewski R."/>
            <person name="Baehler M."/>
        </authorList>
    </citation>
    <scope>NUCLEOTIDE SEQUENCE [MRNA] (ISOFORMS A; B AND C)</scope>
    <source>
        <strain>Sprague-Dawley</strain>
    </source>
</reference>